<keyword id="KW-0413">Isomerase</keyword>
<keyword id="KW-0819">tRNA processing</keyword>
<comment type="function">
    <text evidence="1">Responsible for synthesis of pseudouridine from uracil-55 in the psi GC loop of transfer RNAs.</text>
</comment>
<comment type="catalytic activity">
    <reaction evidence="1">
        <text>uridine(55) in tRNA = pseudouridine(55) in tRNA</text>
        <dbReference type="Rhea" id="RHEA:42532"/>
        <dbReference type="Rhea" id="RHEA-COMP:10101"/>
        <dbReference type="Rhea" id="RHEA-COMP:10102"/>
        <dbReference type="ChEBI" id="CHEBI:65314"/>
        <dbReference type="ChEBI" id="CHEBI:65315"/>
        <dbReference type="EC" id="5.4.99.25"/>
    </reaction>
</comment>
<comment type="similarity">
    <text evidence="1">Belongs to the pseudouridine synthase TruB family. Type 1 subfamily.</text>
</comment>
<sequence length="298" mass="33213">MFNGIIVIDKAAGMTSGDVVYKLRRLLKQKKIGHAGTLDPEVTGVLPIALGQATKLIELMHERPKAYVGEGMLGLATDSYDLEGKILAERALSQPVSDQAIKAAMEKLIGEIVQQPPIYSAVRVNGKRLYEYAREGIPVERPKRTVQVFRYDLTAPSQFDPEKGRQTFTYEVECSKGTYVRSLVNDLGEELGLPAVMTKLRRTASSGYKLQDAVTLEELADNLDHAEDYIQPIDSFFADYQQVDLDAALWQQVKNGAWIKLPLDADKVALRYNKTVKAIYRAKGQGLYCPDLMLLSNE</sequence>
<dbReference type="EC" id="5.4.99.25" evidence="1"/>
<dbReference type="EMBL" id="CP000412">
    <property type="protein sequence ID" value="ABJ58765.1"/>
    <property type="molecule type" value="Genomic_DNA"/>
</dbReference>
<dbReference type="RefSeq" id="WP_003618595.1">
    <property type="nucleotide sequence ID" value="NC_008529.1"/>
</dbReference>
<dbReference type="SMR" id="Q049V7"/>
<dbReference type="KEGG" id="lbu:LBUL_1239"/>
<dbReference type="HOGENOM" id="CLU_032087_0_1_9"/>
<dbReference type="BioCyc" id="LDEL321956:LBUL_RS05815-MONOMER"/>
<dbReference type="GO" id="GO:0003723">
    <property type="term" value="F:RNA binding"/>
    <property type="evidence" value="ECO:0007669"/>
    <property type="project" value="InterPro"/>
</dbReference>
<dbReference type="GO" id="GO:0160148">
    <property type="term" value="F:tRNA pseudouridine(55) synthase activity"/>
    <property type="evidence" value="ECO:0007669"/>
    <property type="project" value="UniProtKB-EC"/>
</dbReference>
<dbReference type="GO" id="GO:1990481">
    <property type="term" value="P:mRNA pseudouridine synthesis"/>
    <property type="evidence" value="ECO:0007669"/>
    <property type="project" value="TreeGrafter"/>
</dbReference>
<dbReference type="GO" id="GO:0031119">
    <property type="term" value="P:tRNA pseudouridine synthesis"/>
    <property type="evidence" value="ECO:0007669"/>
    <property type="project" value="UniProtKB-UniRule"/>
</dbReference>
<dbReference type="CDD" id="cd02573">
    <property type="entry name" value="PseudoU_synth_EcTruB"/>
    <property type="match status" value="1"/>
</dbReference>
<dbReference type="FunFam" id="3.30.2350.10:FF:000011">
    <property type="entry name" value="tRNA pseudouridine synthase B"/>
    <property type="match status" value="1"/>
</dbReference>
<dbReference type="Gene3D" id="3.30.2350.10">
    <property type="entry name" value="Pseudouridine synthase"/>
    <property type="match status" value="1"/>
</dbReference>
<dbReference type="HAMAP" id="MF_01080">
    <property type="entry name" value="TruB_bact"/>
    <property type="match status" value="1"/>
</dbReference>
<dbReference type="InterPro" id="IPR020103">
    <property type="entry name" value="PsdUridine_synth_cat_dom_sf"/>
</dbReference>
<dbReference type="InterPro" id="IPR002501">
    <property type="entry name" value="PsdUridine_synth_N"/>
</dbReference>
<dbReference type="InterPro" id="IPR014780">
    <property type="entry name" value="tRNA_psdUridine_synth_TruB"/>
</dbReference>
<dbReference type="InterPro" id="IPR032819">
    <property type="entry name" value="TruB_C"/>
</dbReference>
<dbReference type="NCBIfam" id="TIGR00431">
    <property type="entry name" value="TruB"/>
    <property type="match status" value="1"/>
</dbReference>
<dbReference type="PANTHER" id="PTHR13767:SF2">
    <property type="entry name" value="PSEUDOURIDYLATE SYNTHASE TRUB1"/>
    <property type="match status" value="1"/>
</dbReference>
<dbReference type="PANTHER" id="PTHR13767">
    <property type="entry name" value="TRNA-PSEUDOURIDINE SYNTHASE"/>
    <property type="match status" value="1"/>
</dbReference>
<dbReference type="Pfam" id="PF16198">
    <property type="entry name" value="TruB_C_2"/>
    <property type="match status" value="1"/>
</dbReference>
<dbReference type="Pfam" id="PF01509">
    <property type="entry name" value="TruB_N"/>
    <property type="match status" value="1"/>
</dbReference>
<dbReference type="SUPFAM" id="SSF55120">
    <property type="entry name" value="Pseudouridine synthase"/>
    <property type="match status" value="1"/>
</dbReference>
<feature type="chain" id="PRO_1000084612" description="tRNA pseudouridine synthase B">
    <location>
        <begin position="1"/>
        <end position="298"/>
    </location>
</feature>
<feature type="active site" description="Nucleophile" evidence="1">
    <location>
        <position position="39"/>
    </location>
</feature>
<reference key="1">
    <citation type="journal article" date="2006" name="Proc. Natl. Acad. Sci. U.S.A.">
        <title>Comparative genomics of the lactic acid bacteria.</title>
        <authorList>
            <person name="Makarova K.S."/>
            <person name="Slesarev A."/>
            <person name="Wolf Y.I."/>
            <person name="Sorokin A."/>
            <person name="Mirkin B."/>
            <person name="Koonin E.V."/>
            <person name="Pavlov A."/>
            <person name="Pavlova N."/>
            <person name="Karamychev V."/>
            <person name="Polouchine N."/>
            <person name="Shakhova V."/>
            <person name="Grigoriev I."/>
            <person name="Lou Y."/>
            <person name="Rohksar D."/>
            <person name="Lucas S."/>
            <person name="Huang K."/>
            <person name="Goodstein D.M."/>
            <person name="Hawkins T."/>
            <person name="Plengvidhya V."/>
            <person name="Welker D."/>
            <person name="Hughes J."/>
            <person name="Goh Y."/>
            <person name="Benson A."/>
            <person name="Baldwin K."/>
            <person name="Lee J.-H."/>
            <person name="Diaz-Muniz I."/>
            <person name="Dosti B."/>
            <person name="Smeianov V."/>
            <person name="Wechter W."/>
            <person name="Barabote R."/>
            <person name="Lorca G."/>
            <person name="Altermann E."/>
            <person name="Barrangou R."/>
            <person name="Ganesan B."/>
            <person name="Xie Y."/>
            <person name="Rawsthorne H."/>
            <person name="Tamir D."/>
            <person name="Parker C."/>
            <person name="Breidt F."/>
            <person name="Broadbent J.R."/>
            <person name="Hutkins R."/>
            <person name="O'Sullivan D."/>
            <person name="Steele J."/>
            <person name="Unlu G."/>
            <person name="Saier M.H. Jr."/>
            <person name="Klaenhammer T."/>
            <person name="Richardson P."/>
            <person name="Kozyavkin S."/>
            <person name="Weimer B.C."/>
            <person name="Mills D.A."/>
        </authorList>
    </citation>
    <scope>NUCLEOTIDE SEQUENCE [LARGE SCALE GENOMIC DNA]</scope>
    <source>
        <strain>ATCC BAA-365 / Lb-18</strain>
    </source>
</reference>
<proteinExistence type="inferred from homology"/>
<organism>
    <name type="scientific">Lactobacillus delbrueckii subsp. bulgaricus (strain ATCC BAA-365 / Lb-18)</name>
    <dbReference type="NCBI Taxonomy" id="321956"/>
    <lineage>
        <taxon>Bacteria</taxon>
        <taxon>Bacillati</taxon>
        <taxon>Bacillota</taxon>
        <taxon>Bacilli</taxon>
        <taxon>Lactobacillales</taxon>
        <taxon>Lactobacillaceae</taxon>
        <taxon>Lactobacillus</taxon>
    </lineage>
</organism>
<evidence type="ECO:0000255" key="1">
    <source>
        <dbReference type="HAMAP-Rule" id="MF_01080"/>
    </source>
</evidence>
<accession>Q049V7</accession>
<name>TRUB_LACDB</name>
<protein>
    <recommendedName>
        <fullName evidence="1">tRNA pseudouridine synthase B</fullName>
        <ecNumber evidence="1">5.4.99.25</ecNumber>
    </recommendedName>
    <alternativeName>
        <fullName evidence="1">tRNA pseudouridine(55) synthase</fullName>
        <shortName evidence="1">Psi55 synthase</shortName>
    </alternativeName>
    <alternativeName>
        <fullName evidence="1">tRNA pseudouridylate synthase</fullName>
    </alternativeName>
    <alternativeName>
        <fullName evidence="1">tRNA-uridine isomerase</fullName>
    </alternativeName>
</protein>
<gene>
    <name evidence="1" type="primary">truB</name>
    <name type="ordered locus">LBUL_1239</name>
</gene>